<gene>
    <name evidence="2" type="primary">ddl</name>
    <name type="ordered locus">MGAS2096_Spy1229</name>
</gene>
<protein>
    <recommendedName>
        <fullName evidence="2">D-alanine--D-alanine ligase</fullName>
        <ecNumber evidence="2">6.3.2.4</ecNumber>
    </recommendedName>
    <alternativeName>
        <fullName evidence="2">D-Ala-D-Ala ligase</fullName>
    </alternativeName>
    <alternativeName>
        <fullName evidence="2">D-alanylalanine synthetase</fullName>
    </alternativeName>
</protein>
<organism>
    <name type="scientific">Streptococcus pyogenes serotype M12 (strain MGAS2096)</name>
    <dbReference type="NCBI Taxonomy" id="370553"/>
    <lineage>
        <taxon>Bacteria</taxon>
        <taxon>Bacillati</taxon>
        <taxon>Bacillota</taxon>
        <taxon>Bacilli</taxon>
        <taxon>Lactobacillales</taxon>
        <taxon>Streptococcaceae</taxon>
        <taxon>Streptococcus</taxon>
    </lineage>
</organism>
<sequence>MSKQTLVLLYGGRSAEREVSVLSAESVMRAVNYDKFLVKTYFITQMGQFIKTQQFSEKPSESERLMTNETIELTQKIKPSDIYEEGAVVFPVLHGPMGEDGSIQGFLEVLRMPYIGTNVMSSSIAMDKITTKRVLESIGIPQVAYTVYIDGQDLEACLVETLARLTFPIFVKPANMGSSVGISKAQTKVELRKAIQLALTYDSRVLIEQGVVAREIEVGLLGNDKVKSTLPGEVIKDVDFYDYQAKYVDNKITMAIPADVDQSIVTEMRSYAEVAFKALGGCGLSRCDFFLTQDGQVYLNELNTMPGFTQWSMYPLLWENMGLAYPDLIEELVTLAQEMFDQRESHLI</sequence>
<proteinExistence type="inferred from homology"/>
<keyword id="KW-0067">ATP-binding</keyword>
<keyword id="KW-0133">Cell shape</keyword>
<keyword id="KW-0961">Cell wall biogenesis/degradation</keyword>
<keyword id="KW-0963">Cytoplasm</keyword>
<keyword id="KW-0436">Ligase</keyword>
<keyword id="KW-0460">Magnesium</keyword>
<keyword id="KW-0464">Manganese</keyword>
<keyword id="KW-0479">Metal-binding</keyword>
<keyword id="KW-0547">Nucleotide-binding</keyword>
<keyword id="KW-0573">Peptidoglycan synthesis</keyword>
<evidence type="ECO:0000250" key="1"/>
<evidence type="ECO:0000255" key="2">
    <source>
        <dbReference type="HAMAP-Rule" id="MF_00047"/>
    </source>
</evidence>
<accession>Q1JAX7</accession>
<dbReference type="EC" id="6.3.2.4" evidence="2"/>
<dbReference type="EMBL" id="CP000261">
    <property type="protein sequence ID" value="ABF36281.1"/>
    <property type="molecule type" value="Genomic_DNA"/>
</dbReference>
<dbReference type="SMR" id="Q1JAX7"/>
<dbReference type="KEGG" id="spj:MGAS2096_Spy1229"/>
<dbReference type="HOGENOM" id="CLU_039268_0_0_9"/>
<dbReference type="UniPathway" id="UPA00219"/>
<dbReference type="GO" id="GO:0005829">
    <property type="term" value="C:cytosol"/>
    <property type="evidence" value="ECO:0007669"/>
    <property type="project" value="TreeGrafter"/>
</dbReference>
<dbReference type="GO" id="GO:0005524">
    <property type="term" value="F:ATP binding"/>
    <property type="evidence" value="ECO:0007669"/>
    <property type="project" value="UniProtKB-KW"/>
</dbReference>
<dbReference type="GO" id="GO:0008716">
    <property type="term" value="F:D-alanine-D-alanine ligase activity"/>
    <property type="evidence" value="ECO:0007669"/>
    <property type="project" value="UniProtKB-UniRule"/>
</dbReference>
<dbReference type="GO" id="GO:0046872">
    <property type="term" value="F:metal ion binding"/>
    <property type="evidence" value="ECO:0007669"/>
    <property type="project" value="UniProtKB-KW"/>
</dbReference>
<dbReference type="GO" id="GO:0071555">
    <property type="term" value="P:cell wall organization"/>
    <property type="evidence" value="ECO:0007669"/>
    <property type="project" value="UniProtKB-KW"/>
</dbReference>
<dbReference type="GO" id="GO:0009252">
    <property type="term" value="P:peptidoglycan biosynthetic process"/>
    <property type="evidence" value="ECO:0007669"/>
    <property type="project" value="UniProtKB-UniRule"/>
</dbReference>
<dbReference type="GO" id="GO:0008360">
    <property type="term" value="P:regulation of cell shape"/>
    <property type="evidence" value="ECO:0007669"/>
    <property type="project" value="UniProtKB-KW"/>
</dbReference>
<dbReference type="FunFam" id="3.30.1490.20:FF:000007">
    <property type="entry name" value="D-alanine--D-alanine ligase"/>
    <property type="match status" value="1"/>
</dbReference>
<dbReference type="FunFam" id="3.30.470.20:FF:000008">
    <property type="entry name" value="D-alanine--D-alanine ligase"/>
    <property type="match status" value="1"/>
</dbReference>
<dbReference type="Gene3D" id="3.40.50.20">
    <property type="match status" value="1"/>
</dbReference>
<dbReference type="Gene3D" id="3.30.1490.20">
    <property type="entry name" value="ATP-grasp fold, A domain"/>
    <property type="match status" value="1"/>
</dbReference>
<dbReference type="Gene3D" id="3.30.470.20">
    <property type="entry name" value="ATP-grasp fold, B domain"/>
    <property type="match status" value="1"/>
</dbReference>
<dbReference type="HAMAP" id="MF_00047">
    <property type="entry name" value="Dala_Dala_lig"/>
    <property type="match status" value="1"/>
</dbReference>
<dbReference type="InterPro" id="IPR011761">
    <property type="entry name" value="ATP-grasp"/>
</dbReference>
<dbReference type="InterPro" id="IPR013815">
    <property type="entry name" value="ATP_grasp_subdomain_1"/>
</dbReference>
<dbReference type="InterPro" id="IPR000291">
    <property type="entry name" value="D-Ala_lig_Van_CS"/>
</dbReference>
<dbReference type="InterPro" id="IPR005905">
    <property type="entry name" value="D_ala_D_ala"/>
</dbReference>
<dbReference type="InterPro" id="IPR011095">
    <property type="entry name" value="Dala_Dala_lig_C"/>
</dbReference>
<dbReference type="InterPro" id="IPR011127">
    <property type="entry name" value="Dala_Dala_lig_N"/>
</dbReference>
<dbReference type="InterPro" id="IPR016185">
    <property type="entry name" value="PreATP-grasp_dom_sf"/>
</dbReference>
<dbReference type="NCBIfam" id="TIGR01205">
    <property type="entry name" value="D_ala_D_alaTIGR"/>
    <property type="match status" value="1"/>
</dbReference>
<dbReference type="NCBIfam" id="NF002528">
    <property type="entry name" value="PRK01966.1-4"/>
    <property type="match status" value="1"/>
</dbReference>
<dbReference type="NCBIfam" id="NF002529">
    <property type="entry name" value="PRK01966.1-5"/>
    <property type="match status" value="1"/>
</dbReference>
<dbReference type="PANTHER" id="PTHR23132">
    <property type="entry name" value="D-ALANINE--D-ALANINE LIGASE"/>
    <property type="match status" value="1"/>
</dbReference>
<dbReference type="PANTHER" id="PTHR23132:SF25">
    <property type="entry name" value="D-ALANINE--D-ALANINE LIGASE A"/>
    <property type="match status" value="1"/>
</dbReference>
<dbReference type="Pfam" id="PF07478">
    <property type="entry name" value="Dala_Dala_lig_C"/>
    <property type="match status" value="1"/>
</dbReference>
<dbReference type="Pfam" id="PF01820">
    <property type="entry name" value="Dala_Dala_lig_N"/>
    <property type="match status" value="1"/>
</dbReference>
<dbReference type="PIRSF" id="PIRSF039102">
    <property type="entry name" value="Ddl/VanB"/>
    <property type="match status" value="1"/>
</dbReference>
<dbReference type="SUPFAM" id="SSF56059">
    <property type="entry name" value="Glutathione synthetase ATP-binding domain-like"/>
    <property type="match status" value="1"/>
</dbReference>
<dbReference type="SUPFAM" id="SSF52440">
    <property type="entry name" value="PreATP-grasp domain"/>
    <property type="match status" value="1"/>
</dbReference>
<dbReference type="PROSITE" id="PS50975">
    <property type="entry name" value="ATP_GRASP"/>
    <property type="match status" value="1"/>
</dbReference>
<dbReference type="PROSITE" id="PS00843">
    <property type="entry name" value="DALA_DALA_LIGASE_1"/>
    <property type="match status" value="1"/>
</dbReference>
<dbReference type="PROSITE" id="PS00844">
    <property type="entry name" value="DALA_DALA_LIGASE_2"/>
    <property type="match status" value="1"/>
</dbReference>
<comment type="function">
    <text evidence="2">Cell wall formation.</text>
</comment>
<comment type="catalytic activity">
    <reaction evidence="2">
        <text>2 D-alanine + ATP = D-alanyl-D-alanine + ADP + phosphate + H(+)</text>
        <dbReference type="Rhea" id="RHEA:11224"/>
        <dbReference type="ChEBI" id="CHEBI:15378"/>
        <dbReference type="ChEBI" id="CHEBI:30616"/>
        <dbReference type="ChEBI" id="CHEBI:43474"/>
        <dbReference type="ChEBI" id="CHEBI:57416"/>
        <dbReference type="ChEBI" id="CHEBI:57822"/>
        <dbReference type="ChEBI" id="CHEBI:456216"/>
        <dbReference type="EC" id="6.3.2.4"/>
    </reaction>
</comment>
<comment type="cofactor">
    <cofactor evidence="1">
        <name>Mg(2+)</name>
        <dbReference type="ChEBI" id="CHEBI:18420"/>
    </cofactor>
    <cofactor evidence="1">
        <name>Mn(2+)</name>
        <dbReference type="ChEBI" id="CHEBI:29035"/>
    </cofactor>
    <text evidence="1">Binds 2 magnesium or manganese ions per subunit.</text>
</comment>
<comment type="pathway">
    <text evidence="2">Cell wall biogenesis; peptidoglycan biosynthesis.</text>
</comment>
<comment type="subcellular location">
    <subcellularLocation>
        <location evidence="2">Cytoplasm</location>
    </subcellularLocation>
</comment>
<comment type="similarity">
    <text evidence="2">Belongs to the D-alanine--D-alanine ligase family.</text>
</comment>
<reference key="1">
    <citation type="journal article" date="2006" name="Proc. Natl. Acad. Sci. U.S.A.">
        <title>Molecular genetic anatomy of inter- and intraserotype variation in the human bacterial pathogen group A Streptococcus.</title>
        <authorList>
            <person name="Beres S.B."/>
            <person name="Richter E.W."/>
            <person name="Nagiec M.J."/>
            <person name="Sumby P."/>
            <person name="Porcella S.F."/>
            <person name="DeLeo F.R."/>
            <person name="Musser J.M."/>
        </authorList>
    </citation>
    <scope>NUCLEOTIDE SEQUENCE [LARGE SCALE GENOMIC DNA]</scope>
    <source>
        <strain>MGAS2096</strain>
    </source>
</reference>
<feature type="chain" id="PRO_1000030500" description="D-alanine--D-alanine ligase">
    <location>
        <begin position="1"/>
        <end position="348"/>
    </location>
</feature>
<feature type="domain" description="ATP-grasp" evidence="2">
    <location>
        <begin position="132"/>
        <end position="334"/>
    </location>
</feature>
<feature type="binding site" evidence="2">
    <location>
        <begin position="162"/>
        <end position="217"/>
    </location>
    <ligand>
        <name>ATP</name>
        <dbReference type="ChEBI" id="CHEBI:30616"/>
    </ligand>
</feature>
<feature type="binding site" evidence="2">
    <location>
        <position position="288"/>
    </location>
    <ligand>
        <name>Mg(2+)</name>
        <dbReference type="ChEBI" id="CHEBI:18420"/>
        <label>1</label>
    </ligand>
</feature>
<feature type="binding site" evidence="2">
    <location>
        <position position="301"/>
    </location>
    <ligand>
        <name>Mg(2+)</name>
        <dbReference type="ChEBI" id="CHEBI:18420"/>
        <label>1</label>
    </ligand>
</feature>
<feature type="binding site" evidence="2">
    <location>
        <position position="301"/>
    </location>
    <ligand>
        <name>Mg(2+)</name>
        <dbReference type="ChEBI" id="CHEBI:18420"/>
        <label>2</label>
    </ligand>
</feature>
<feature type="binding site" evidence="2">
    <location>
        <position position="303"/>
    </location>
    <ligand>
        <name>Mg(2+)</name>
        <dbReference type="ChEBI" id="CHEBI:18420"/>
        <label>2</label>
    </ligand>
</feature>
<name>DDL_STRPB</name>